<dbReference type="EMBL" id="AM398681">
    <property type="protein sequence ID" value="CAL42506.1"/>
    <property type="molecule type" value="Genomic_DNA"/>
</dbReference>
<dbReference type="RefSeq" id="YP_001295324.1">
    <property type="nucleotide sequence ID" value="NC_009613.3"/>
</dbReference>
<dbReference type="SMR" id="A6GWN3"/>
<dbReference type="STRING" id="402612.FP0395"/>
<dbReference type="EnsemblBacteria" id="CAL42506">
    <property type="protein sequence ID" value="CAL42506"/>
    <property type="gene ID" value="FP0395"/>
</dbReference>
<dbReference type="KEGG" id="fps:FP0395"/>
<dbReference type="PATRIC" id="fig|402612.5.peg.406"/>
<dbReference type="eggNOG" id="COG0249">
    <property type="taxonomic scope" value="Bacteria"/>
</dbReference>
<dbReference type="HOGENOM" id="CLU_002472_3_1_10"/>
<dbReference type="OrthoDB" id="9802448at2"/>
<dbReference type="Proteomes" id="UP000006394">
    <property type="component" value="Chromosome"/>
</dbReference>
<dbReference type="GO" id="GO:0005829">
    <property type="term" value="C:cytosol"/>
    <property type="evidence" value="ECO:0007669"/>
    <property type="project" value="TreeGrafter"/>
</dbReference>
<dbReference type="GO" id="GO:0005524">
    <property type="term" value="F:ATP binding"/>
    <property type="evidence" value="ECO:0007669"/>
    <property type="project" value="UniProtKB-UniRule"/>
</dbReference>
<dbReference type="GO" id="GO:0140664">
    <property type="term" value="F:ATP-dependent DNA damage sensor activity"/>
    <property type="evidence" value="ECO:0007669"/>
    <property type="project" value="InterPro"/>
</dbReference>
<dbReference type="GO" id="GO:0003684">
    <property type="term" value="F:damaged DNA binding"/>
    <property type="evidence" value="ECO:0007669"/>
    <property type="project" value="UniProtKB-UniRule"/>
</dbReference>
<dbReference type="GO" id="GO:0030983">
    <property type="term" value="F:mismatched DNA binding"/>
    <property type="evidence" value="ECO:0007669"/>
    <property type="project" value="InterPro"/>
</dbReference>
<dbReference type="GO" id="GO:0006298">
    <property type="term" value="P:mismatch repair"/>
    <property type="evidence" value="ECO:0007669"/>
    <property type="project" value="UniProtKB-UniRule"/>
</dbReference>
<dbReference type="CDD" id="cd03284">
    <property type="entry name" value="ABC_MutS1"/>
    <property type="match status" value="1"/>
</dbReference>
<dbReference type="FunFam" id="3.40.1170.10:FF:000001">
    <property type="entry name" value="DNA mismatch repair protein MutS"/>
    <property type="match status" value="1"/>
</dbReference>
<dbReference type="FunFam" id="3.40.50.300:FF:000870">
    <property type="entry name" value="MutS protein homolog 4"/>
    <property type="match status" value="1"/>
</dbReference>
<dbReference type="Gene3D" id="1.10.1420.10">
    <property type="match status" value="2"/>
</dbReference>
<dbReference type="Gene3D" id="3.40.1170.10">
    <property type="entry name" value="DNA repair protein MutS, domain I"/>
    <property type="match status" value="1"/>
</dbReference>
<dbReference type="Gene3D" id="3.30.420.110">
    <property type="entry name" value="MutS, connector domain"/>
    <property type="match status" value="1"/>
</dbReference>
<dbReference type="Gene3D" id="3.40.50.300">
    <property type="entry name" value="P-loop containing nucleotide triphosphate hydrolases"/>
    <property type="match status" value="1"/>
</dbReference>
<dbReference type="HAMAP" id="MF_00096">
    <property type="entry name" value="MutS"/>
    <property type="match status" value="1"/>
</dbReference>
<dbReference type="InterPro" id="IPR005748">
    <property type="entry name" value="DNA_mismatch_repair_MutS"/>
</dbReference>
<dbReference type="InterPro" id="IPR007695">
    <property type="entry name" value="DNA_mismatch_repair_MutS-lik_N"/>
</dbReference>
<dbReference type="InterPro" id="IPR017261">
    <property type="entry name" value="DNA_mismatch_repair_MutS/MSH"/>
</dbReference>
<dbReference type="InterPro" id="IPR000432">
    <property type="entry name" value="DNA_mismatch_repair_MutS_C"/>
</dbReference>
<dbReference type="InterPro" id="IPR007861">
    <property type="entry name" value="DNA_mismatch_repair_MutS_clamp"/>
</dbReference>
<dbReference type="InterPro" id="IPR007696">
    <property type="entry name" value="DNA_mismatch_repair_MutS_core"/>
</dbReference>
<dbReference type="InterPro" id="IPR016151">
    <property type="entry name" value="DNA_mismatch_repair_MutS_N"/>
</dbReference>
<dbReference type="InterPro" id="IPR036187">
    <property type="entry name" value="DNA_mismatch_repair_MutS_sf"/>
</dbReference>
<dbReference type="InterPro" id="IPR007860">
    <property type="entry name" value="DNA_mmatch_repair_MutS_con_dom"/>
</dbReference>
<dbReference type="InterPro" id="IPR045076">
    <property type="entry name" value="MutS"/>
</dbReference>
<dbReference type="InterPro" id="IPR036678">
    <property type="entry name" value="MutS_con_dom_sf"/>
</dbReference>
<dbReference type="InterPro" id="IPR027417">
    <property type="entry name" value="P-loop_NTPase"/>
</dbReference>
<dbReference type="NCBIfam" id="TIGR01070">
    <property type="entry name" value="mutS1"/>
    <property type="match status" value="1"/>
</dbReference>
<dbReference type="NCBIfam" id="NF003810">
    <property type="entry name" value="PRK05399.1"/>
    <property type="match status" value="1"/>
</dbReference>
<dbReference type="PANTHER" id="PTHR11361:SF34">
    <property type="entry name" value="DNA MISMATCH REPAIR PROTEIN MSH1, MITOCHONDRIAL"/>
    <property type="match status" value="1"/>
</dbReference>
<dbReference type="PANTHER" id="PTHR11361">
    <property type="entry name" value="DNA MISMATCH REPAIR PROTEIN MUTS FAMILY MEMBER"/>
    <property type="match status" value="1"/>
</dbReference>
<dbReference type="Pfam" id="PF01624">
    <property type="entry name" value="MutS_I"/>
    <property type="match status" value="1"/>
</dbReference>
<dbReference type="Pfam" id="PF05188">
    <property type="entry name" value="MutS_II"/>
    <property type="match status" value="1"/>
</dbReference>
<dbReference type="Pfam" id="PF05192">
    <property type="entry name" value="MutS_III"/>
    <property type="match status" value="1"/>
</dbReference>
<dbReference type="Pfam" id="PF05190">
    <property type="entry name" value="MutS_IV"/>
    <property type="match status" value="1"/>
</dbReference>
<dbReference type="Pfam" id="PF00488">
    <property type="entry name" value="MutS_V"/>
    <property type="match status" value="1"/>
</dbReference>
<dbReference type="PIRSF" id="PIRSF037677">
    <property type="entry name" value="DNA_mis_repair_Msh6"/>
    <property type="match status" value="1"/>
</dbReference>
<dbReference type="SMART" id="SM00534">
    <property type="entry name" value="MUTSac"/>
    <property type="match status" value="1"/>
</dbReference>
<dbReference type="SMART" id="SM00533">
    <property type="entry name" value="MUTSd"/>
    <property type="match status" value="1"/>
</dbReference>
<dbReference type="SUPFAM" id="SSF55271">
    <property type="entry name" value="DNA repair protein MutS, domain I"/>
    <property type="match status" value="1"/>
</dbReference>
<dbReference type="SUPFAM" id="SSF53150">
    <property type="entry name" value="DNA repair protein MutS, domain II"/>
    <property type="match status" value="1"/>
</dbReference>
<dbReference type="SUPFAM" id="SSF48334">
    <property type="entry name" value="DNA repair protein MutS, domain III"/>
    <property type="match status" value="1"/>
</dbReference>
<dbReference type="SUPFAM" id="SSF52540">
    <property type="entry name" value="P-loop containing nucleoside triphosphate hydrolases"/>
    <property type="match status" value="1"/>
</dbReference>
<dbReference type="PROSITE" id="PS00486">
    <property type="entry name" value="DNA_MISMATCH_REPAIR_2"/>
    <property type="match status" value="1"/>
</dbReference>
<protein>
    <recommendedName>
        <fullName evidence="1">DNA mismatch repair protein MutS</fullName>
    </recommendedName>
</protein>
<accession>A6GWN3</accession>
<comment type="function">
    <text evidence="1">This protein is involved in the repair of mismatches in DNA. It is possible that it carries out the mismatch recognition step. This protein has a weak ATPase activity.</text>
</comment>
<comment type="similarity">
    <text evidence="1">Belongs to the DNA mismatch repair MutS family.</text>
</comment>
<name>MUTS_FLAPJ</name>
<proteinExistence type="inferred from homology"/>
<organism>
    <name type="scientific">Flavobacterium psychrophilum (strain ATCC 49511 / DSM 21280 / CIP 103535 / JIP02/86)</name>
    <dbReference type="NCBI Taxonomy" id="402612"/>
    <lineage>
        <taxon>Bacteria</taxon>
        <taxon>Pseudomonadati</taxon>
        <taxon>Bacteroidota</taxon>
        <taxon>Flavobacteriia</taxon>
        <taxon>Flavobacteriales</taxon>
        <taxon>Flavobacteriaceae</taxon>
        <taxon>Flavobacterium</taxon>
    </lineage>
</organism>
<keyword id="KW-0067">ATP-binding</keyword>
<keyword id="KW-0227">DNA damage</keyword>
<keyword id="KW-0234">DNA repair</keyword>
<keyword id="KW-0238">DNA-binding</keyword>
<keyword id="KW-0547">Nucleotide-binding</keyword>
<keyword id="KW-1185">Reference proteome</keyword>
<gene>
    <name evidence="1" type="primary">mutS</name>
    <name type="ordered locus">FP0395</name>
</gene>
<evidence type="ECO:0000255" key="1">
    <source>
        <dbReference type="HAMAP-Rule" id="MF_00096"/>
    </source>
</evidence>
<feature type="chain" id="PRO_0000335154" description="DNA mismatch repair protein MutS">
    <location>
        <begin position="1"/>
        <end position="866"/>
    </location>
</feature>
<feature type="binding site" evidence="1">
    <location>
        <begin position="618"/>
        <end position="625"/>
    </location>
    <ligand>
        <name>ATP</name>
        <dbReference type="ChEBI" id="CHEBI:30616"/>
    </ligand>
</feature>
<sequence length="866" mass="97456">MSTKEIKETPLMKQYNEIKRKYPDACLLFRVGDFYETFGDDAVRASKILGITLTKRGAGSPTETALAGFPHHSINTYLPKLVKAGLRVAICDQLEDPKMTKTIVKRGVTELVTPGVSMNDEVLNSKTNNFLASIYFGKKIIGVSFLDVSTGEFLTSEGNEEYIDKLLQNFSPSEILVPKQNKGDFKEKFGDNFHAFYLEDWVYKEDYATETLTNHFQTNSLKGFGIEELASGIIASGAILYYLSETQHNKIQHITSIHRIAEDAYVWMDRFTIRNLELYHSYNPNAVTLLDIIDKTLSPMGGRMLKRWLALPLKNATIIKSRHEVVAYFKDHQEILQKVQNQIKQISDLERLISKVAAGRISPREIIYLKESLDAIIPIKELALKSPQEAVKVIGDSLHSCDLLREKIKTTLNQEAPVAISKGNAIAAGIHPELDELRGISALGKEYLEGIEKRESEKTGISSLKISFNNVFGYYIEVRNTHKDKVPTEWIRKQTLVNAERYITEELKEYETKILGAEEKIQQIENQLFEQLVSWIATYIKPVQLNANLIAQLDCLISFTQLAIDNKYVCPQINDSFALDIKNGRHPVIEKQLPIGVPYIANDVYLDRDTQQLIMITGPNMSGKSAILRQTALIVLLAQMGSFVPAESVQMGIVDKIFTRVGASDNISMGESTFMVEMNETASILNNISDRSLVLLDEIGRGTSTYDGVSIAWAIAEFLHENPAQPKTLFATHYHELNEMTESLPRIQNYNVSVKELKDTVLFIRKLVKGGSAHSFGIHVAKMAGMPQIVLQKAEKILKKLEKNHSAEALSGTKGNKDDIQLSIFNLDDPLLEEIKEEILNLDINTLTPVEALMKLNEIKRMLSKK</sequence>
<reference key="1">
    <citation type="journal article" date="2007" name="Nat. Biotechnol.">
        <title>Complete genome sequence of the fish pathogen Flavobacterium psychrophilum.</title>
        <authorList>
            <person name="Duchaud E."/>
            <person name="Boussaha M."/>
            <person name="Loux V."/>
            <person name="Bernardet J.-F."/>
            <person name="Michel C."/>
            <person name="Kerouault B."/>
            <person name="Mondot S."/>
            <person name="Nicolas P."/>
            <person name="Bossy R."/>
            <person name="Caron C."/>
            <person name="Bessieres P."/>
            <person name="Gibrat J.-F."/>
            <person name="Claverol S."/>
            <person name="Dumetz F."/>
            <person name="Le Henaff M."/>
            <person name="Benmansour A."/>
        </authorList>
    </citation>
    <scope>NUCLEOTIDE SEQUENCE [LARGE SCALE GENOMIC DNA]</scope>
    <source>
        <strain>ATCC 49511 / DSM 21280 / CIP 103535 / JIP02/86</strain>
    </source>
</reference>